<proteinExistence type="inferred from homology"/>
<organism>
    <name type="scientific">Serratia proteamaculans (strain 568)</name>
    <dbReference type="NCBI Taxonomy" id="399741"/>
    <lineage>
        <taxon>Bacteria</taxon>
        <taxon>Pseudomonadati</taxon>
        <taxon>Pseudomonadota</taxon>
        <taxon>Gammaproteobacteria</taxon>
        <taxon>Enterobacterales</taxon>
        <taxon>Yersiniaceae</taxon>
        <taxon>Serratia</taxon>
    </lineage>
</organism>
<accession>A8G8Y2</accession>
<reference key="1">
    <citation type="submission" date="2007-09" db="EMBL/GenBank/DDBJ databases">
        <title>Complete sequence of chromosome of Serratia proteamaculans 568.</title>
        <authorList>
            <consortium name="US DOE Joint Genome Institute"/>
            <person name="Copeland A."/>
            <person name="Lucas S."/>
            <person name="Lapidus A."/>
            <person name="Barry K."/>
            <person name="Glavina del Rio T."/>
            <person name="Dalin E."/>
            <person name="Tice H."/>
            <person name="Pitluck S."/>
            <person name="Chain P."/>
            <person name="Malfatti S."/>
            <person name="Shin M."/>
            <person name="Vergez L."/>
            <person name="Schmutz J."/>
            <person name="Larimer F."/>
            <person name="Land M."/>
            <person name="Hauser L."/>
            <person name="Kyrpides N."/>
            <person name="Kim E."/>
            <person name="Taghavi S."/>
            <person name="Newman L."/>
            <person name="Vangronsveld J."/>
            <person name="van der Lelie D."/>
            <person name="Richardson P."/>
        </authorList>
    </citation>
    <scope>NUCLEOTIDE SEQUENCE [LARGE SCALE GENOMIC DNA]</scope>
    <source>
        <strain>568</strain>
    </source>
</reference>
<gene>
    <name evidence="1" type="primary">fbp</name>
    <name type="ordered locus">Spro_0464</name>
</gene>
<feature type="chain" id="PRO_0000364698" description="Fructose-1,6-bisphosphatase class 1">
    <location>
        <begin position="1"/>
        <end position="334"/>
    </location>
</feature>
<feature type="binding site" evidence="1">
    <location>
        <position position="89"/>
    </location>
    <ligand>
        <name>Mg(2+)</name>
        <dbReference type="ChEBI" id="CHEBI:18420"/>
        <label>1</label>
    </ligand>
</feature>
<feature type="binding site" evidence="1">
    <location>
        <position position="112"/>
    </location>
    <ligand>
        <name>Mg(2+)</name>
        <dbReference type="ChEBI" id="CHEBI:18420"/>
        <label>1</label>
    </ligand>
</feature>
<feature type="binding site" evidence="1">
    <location>
        <position position="112"/>
    </location>
    <ligand>
        <name>Mg(2+)</name>
        <dbReference type="ChEBI" id="CHEBI:18420"/>
        <label>2</label>
    </ligand>
</feature>
<feature type="binding site" evidence="1">
    <location>
        <position position="114"/>
    </location>
    <ligand>
        <name>Mg(2+)</name>
        <dbReference type="ChEBI" id="CHEBI:18420"/>
        <label>1</label>
    </ligand>
</feature>
<feature type="binding site" evidence="1">
    <location>
        <begin position="115"/>
        <end position="118"/>
    </location>
    <ligand>
        <name>substrate</name>
    </ligand>
</feature>
<feature type="binding site" evidence="1">
    <location>
        <position position="115"/>
    </location>
    <ligand>
        <name>Mg(2+)</name>
        <dbReference type="ChEBI" id="CHEBI:18420"/>
        <label>2</label>
    </ligand>
</feature>
<feature type="binding site" evidence="1">
    <location>
        <position position="208"/>
    </location>
    <ligand>
        <name>substrate</name>
    </ligand>
</feature>
<feature type="binding site" evidence="1">
    <location>
        <position position="241"/>
    </location>
    <ligand>
        <name>substrate</name>
    </ligand>
</feature>
<feature type="binding site" evidence="1">
    <location>
        <position position="271"/>
    </location>
    <ligand>
        <name>substrate</name>
    </ligand>
</feature>
<feature type="binding site" evidence="1">
    <location>
        <position position="277"/>
    </location>
    <ligand>
        <name>Mg(2+)</name>
        <dbReference type="ChEBI" id="CHEBI:18420"/>
        <label>2</label>
    </ligand>
</feature>
<name>F16PA_SERP5</name>
<protein>
    <recommendedName>
        <fullName evidence="1">Fructose-1,6-bisphosphatase class 1</fullName>
        <shortName evidence="1">FBPase class 1</shortName>
        <ecNumber evidence="1">3.1.3.11</ecNumber>
    </recommendedName>
    <alternativeName>
        <fullName evidence="1">D-fructose-1,6-bisphosphate 1-phosphohydrolase class 1</fullName>
    </alternativeName>
</protein>
<dbReference type="EC" id="3.1.3.11" evidence="1"/>
<dbReference type="EMBL" id="CP000826">
    <property type="protein sequence ID" value="ABV39572.1"/>
    <property type="molecule type" value="Genomic_DNA"/>
</dbReference>
<dbReference type="SMR" id="A8G8Y2"/>
<dbReference type="STRING" id="399741.Spro_0464"/>
<dbReference type="KEGG" id="spe:Spro_0464"/>
<dbReference type="eggNOG" id="COG0158">
    <property type="taxonomic scope" value="Bacteria"/>
</dbReference>
<dbReference type="HOGENOM" id="CLU_039977_2_2_6"/>
<dbReference type="OrthoDB" id="9806756at2"/>
<dbReference type="UniPathway" id="UPA00138"/>
<dbReference type="GO" id="GO:0005829">
    <property type="term" value="C:cytosol"/>
    <property type="evidence" value="ECO:0007669"/>
    <property type="project" value="TreeGrafter"/>
</dbReference>
<dbReference type="GO" id="GO:0042132">
    <property type="term" value="F:fructose 1,6-bisphosphate 1-phosphatase activity"/>
    <property type="evidence" value="ECO:0007669"/>
    <property type="project" value="UniProtKB-UniRule"/>
</dbReference>
<dbReference type="GO" id="GO:0000287">
    <property type="term" value="F:magnesium ion binding"/>
    <property type="evidence" value="ECO:0007669"/>
    <property type="project" value="UniProtKB-UniRule"/>
</dbReference>
<dbReference type="GO" id="GO:0030388">
    <property type="term" value="P:fructose 1,6-bisphosphate metabolic process"/>
    <property type="evidence" value="ECO:0007669"/>
    <property type="project" value="TreeGrafter"/>
</dbReference>
<dbReference type="GO" id="GO:0006002">
    <property type="term" value="P:fructose 6-phosphate metabolic process"/>
    <property type="evidence" value="ECO:0007669"/>
    <property type="project" value="TreeGrafter"/>
</dbReference>
<dbReference type="GO" id="GO:0006000">
    <property type="term" value="P:fructose metabolic process"/>
    <property type="evidence" value="ECO:0007669"/>
    <property type="project" value="TreeGrafter"/>
</dbReference>
<dbReference type="GO" id="GO:0006094">
    <property type="term" value="P:gluconeogenesis"/>
    <property type="evidence" value="ECO:0007669"/>
    <property type="project" value="UniProtKB-UniRule"/>
</dbReference>
<dbReference type="GO" id="GO:0005986">
    <property type="term" value="P:sucrose biosynthetic process"/>
    <property type="evidence" value="ECO:0007669"/>
    <property type="project" value="TreeGrafter"/>
</dbReference>
<dbReference type="CDD" id="cd00354">
    <property type="entry name" value="FBPase"/>
    <property type="match status" value="1"/>
</dbReference>
<dbReference type="FunFam" id="3.30.540.10:FF:000002">
    <property type="entry name" value="Fructose-1,6-bisphosphatase class 1"/>
    <property type="match status" value="1"/>
</dbReference>
<dbReference type="FunFam" id="3.40.190.80:FF:000001">
    <property type="entry name" value="Fructose-1,6-bisphosphatase class 1"/>
    <property type="match status" value="1"/>
</dbReference>
<dbReference type="Gene3D" id="3.40.190.80">
    <property type="match status" value="1"/>
</dbReference>
<dbReference type="Gene3D" id="3.30.540.10">
    <property type="entry name" value="Fructose-1,6-Bisphosphatase, subunit A, domain 1"/>
    <property type="match status" value="1"/>
</dbReference>
<dbReference type="HAMAP" id="MF_01855">
    <property type="entry name" value="FBPase_class1"/>
    <property type="match status" value="1"/>
</dbReference>
<dbReference type="InterPro" id="IPR044015">
    <property type="entry name" value="FBPase_C_dom"/>
</dbReference>
<dbReference type="InterPro" id="IPR000146">
    <property type="entry name" value="FBPase_class-1"/>
</dbReference>
<dbReference type="InterPro" id="IPR033391">
    <property type="entry name" value="FBPase_N"/>
</dbReference>
<dbReference type="InterPro" id="IPR028343">
    <property type="entry name" value="FBPtase"/>
</dbReference>
<dbReference type="InterPro" id="IPR020548">
    <property type="entry name" value="Fructose_bisphosphatase_AS"/>
</dbReference>
<dbReference type="NCBIfam" id="NF006778">
    <property type="entry name" value="PRK09293.1-1"/>
    <property type="match status" value="1"/>
</dbReference>
<dbReference type="PANTHER" id="PTHR11556">
    <property type="entry name" value="FRUCTOSE-1,6-BISPHOSPHATASE-RELATED"/>
    <property type="match status" value="1"/>
</dbReference>
<dbReference type="PANTHER" id="PTHR11556:SF35">
    <property type="entry name" value="SEDOHEPTULOSE-1,7-BISPHOSPHATASE, CHLOROPLASTIC"/>
    <property type="match status" value="1"/>
</dbReference>
<dbReference type="Pfam" id="PF00316">
    <property type="entry name" value="FBPase"/>
    <property type="match status" value="1"/>
</dbReference>
<dbReference type="Pfam" id="PF18913">
    <property type="entry name" value="FBPase_C"/>
    <property type="match status" value="1"/>
</dbReference>
<dbReference type="PIRSF" id="PIRSF500210">
    <property type="entry name" value="FBPtase"/>
    <property type="match status" value="1"/>
</dbReference>
<dbReference type="PIRSF" id="PIRSF000904">
    <property type="entry name" value="FBPtase_SBPase"/>
    <property type="match status" value="1"/>
</dbReference>
<dbReference type="PRINTS" id="PR00115">
    <property type="entry name" value="F16BPHPHTASE"/>
</dbReference>
<dbReference type="SUPFAM" id="SSF56655">
    <property type="entry name" value="Carbohydrate phosphatase"/>
    <property type="match status" value="1"/>
</dbReference>
<dbReference type="PROSITE" id="PS00124">
    <property type="entry name" value="FBPASE"/>
    <property type="match status" value="1"/>
</dbReference>
<sequence length="334" mass="36735">MKTLGEFIVEKQHDFSHATGELTALLSAIKLGAKIIHRDINKAGLVDILGTSGVSNVQGEVQMKLDLYANEKLKAALKARGEVAGIASEEEDEIVIFDGERAENAKYVVLMDPLDGSSNIDVNVSVGTIFSIYRRITPVGIPVTEEDFLQPGSAQVAAGYVVYGSSTMLVYTTGYGVHAFTYDPSLGVFCLSHEKVRFPATGNMYSINEGNYIKFPRGVKKYIKYCQEQDEATQRPYTSRYIGSLVADFHRNLLKGGIYIYPSTASHPQGKLRLLYECNPMAFLAEQAGGKASDGKNRILDITPVKLHQRAPFFVGTKSMVEDAERFIAENPDE</sequence>
<evidence type="ECO:0000255" key="1">
    <source>
        <dbReference type="HAMAP-Rule" id="MF_01855"/>
    </source>
</evidence>
<keyword id="KW-0119">Carbohydrate metabolism</keyword>
<keyword id="KW-0963">Cytoplasm</keyword>
<keyword id="KW-0378">Hydrolase</keyword>
<keyword id="KW-0460">Magnesium</keyword>
<keyword id="KW-0479">Metal-binding</keyword>
<comment type="catalytic activity">
    <reaction evidence="1">
        <text>beta-D-fructose 1,6-bisphosphate + H2O = beta-D-fructose 6-phosphate + phosphate</text>
        <dbReference type="Rhea" id="RHEA:11064"/>
        <dbReference type="ChEBI" id="CHEBI:15377"/>
        <dbReference type="ChEBI" id="CHEBI:32966"/>
        <dbReference type="ChEBI" id="CHEBI:43474"/>
        <dbReference type="ChEBI" id="CHEBI:57634"/>
        <dbReference type="EC" id="3.1.3.11"/>
    </reaction>
</comment>
<comment type="cofactor">
    <cofactor evidence="1">
        <name>Mg(2+)</name>
        <dbReference type="ChEBI" id="CHEBI:18420"/>
    </cofactor>
    <text evidence="1">Binds 2 magnesium ions per subunit.</text>
</comment>
<comment type="pathway">
    <text evidence="1">Carbohydrate biosynthesis; gluconeogenesis.</text>
</comment>
<comment type="subunit">
    <text evidence="1">Homotetramer.</text>
</comment>
<comment type="subcellular location">
    <subcellularLocation>
        <location evidence="1">Cytoplasm</location>
    </subcellularLocation>
</comment>
<comment type="similarity">
    <text evidence="1">Belongs to the FBPase class 1 family.</text>
</comment>